<gene>
    <name type="primary">N</name>
    <name type="synonym">I</name>
    <name type="ORF">7b</name>
</gene>
<dbReference type="EMBL" id="AY597011">
    <property type="protein sequence ID" value="AAT98586.1"/>
    <property type="molecule type" value="Genomic_RNA"/>
</dbReference>
<dbReference type="DNASU" id="3200424"/>
<dbReference type="KEGG" id="vg:3200424"/>
<dbReference type="Proteomes" id="UP000008170">
    <property type="component" value="Segment"/>
</dbReference>
<dbReference type="GO" id="GO:0044423">
    <property type="term" value="C:virion component"/>
    <property type="evidence" value="ECO:0007669"/>
    <property type="project" value="UniProtKB-KW"/>
</dbReference>
<dbReference type="CDD" id="cd21662">
    <property type="entry name" value="embe-CoV_Protein-I_like"/>
    <property type="match status" value="1"/>
</dbReference>
<dbReference type="InterPro" id="IPR004876">
    <property type="entry name" value="Corona_nucI"/>
</dbReference>
<dbReference type="InterPro" id="IPR044311">
    <property type="entry name" value="N2-like_embe-CoV"/>
</dbReference>
<dbReference type="Pfam" id="PF03187">
    <property type="entry name" value="Corona_I"/>
    <property type="match status" value="1"/>
</dbReference>
<name>IORF_CVHN1</name>
<protein>
    <recommendedName>
        <fullName>Protein I</fullName>
    </recommendedName>
    <alternativeName>
        <fullName>Accessory protein N2</fullName>
    </alternativeName>
    <alternativeName>
        <fullName>N internal ORF protein</fullName>
        <shortName>IORF</shortName>
    </alternativeName>
    <alternativeName>
        <fullName>Orf8 protein</fullName>
    </alternativeName>
    <alternativeName>
        <fullName>Protein in nucleocapsid ORF</fullName>
    </alternativeName>
</protein>
<organismHost>
    <name type="scientific">Homo sapiens</name>
    <name type="common">Human</name>
    <dbReference type="NCBI Taxonomy" id="9606"/>
</organismHost>
<comment type="function">
    <text evidence="1">Structural protein that is not essential for the viral replication either in tissue culture or in its natural host.</text>
</comment>
<comment type="subcellular location">
    <subcellularLocation>
        <location evidence="1">Virion</location>
    </subcellularLocation>
</comment>
<comment type="miscellaneous">
    <text>The gene encoding this protein is included within the N gene (alternative ORF).</text>
</comment>
<comment type="miscellaneous">
    <text>Isolate N1 belongs to genotype A.</text>
</comment>
<comment type="similarity">
    <text evidence="2">Belongs to the coronavirus I protein family.</text>
</comment>
<sequence length="205" mass="22794">MLEVEAPLEIVQESSRKLLGLTNLSEITKPLIEAEKPNLNSLCLLNHKEILSHIIPGSPGSLNFKKVETLNFQMVKEFPLLSEYPLLKQKDIGIDTAGVLLKQLMVNKSSCYRDGISTISVPAHMPMHPMVNPSKGSSGLLITKLTLLLPPMFRQGILLLKKLSLLGFRLVRFCLKAIMLKAQEGLLLIVDQVHVLNHVDPIIVH</sequence>
<feature type="chain" id="PRO_0000297764" description="Protein I">
    <location>
        <begin position="1"/>
        <end position="205"/>
    </location>
</feature>
<evidence type="ECO:0000250" key="1"/>
<evidence type="ECO:0000305" key="2"/>
<proteinExistence type="inferred from homology"/>
<reference key="1">
    <citation type="journal article" date="2005" name="J. Virol.">
        <title>Characterization and complete genome sequence of a novel coronavirus, coronavirus HKU1, from patients with pneumonia.</title>
        <authorList>
            <person name="Woo P.C.Y."/>
            <person name="Lau S.K.P."/>
            <person name="Chu C.-M."/>
            <person name="Chan K.-H."/>
            <person name="Tsoi H.-W."/>
            <person name="Huang Y."/>
            <person name="Wong B.H.L."/>
            <person name="Poon R.W.S."/>
            <person name="Cai J.J."/>
            <person name="Luk W.-K."/>
            <person name="Poon L.L.M."/>
            <person name="Wong S.S.Y."/>
            <person name="Guan Y."/>
            <person name="Peiris J.S.M."/>
            <person name="Yuen K.-Y."/>
        </authorList>
    </citation>
    <scope>NUCLEOTIDE SEQUENCE [GENOMIC RNA]</scope>
</reference>
<keyword id="KW-0946">Virion</keyword>
<organism>
    <name type="scientific">Human coronavirus HKU1 (isolate N1)</name>
    <name type="common">HCoV-HKU1</name>
    <dbReference type="NCBI Taxonomy" id="443239"/>
    <lineage>
        <taxon>Viruses</taxon>
        <taxon>Riboviria</taxon>
        <taxon>Orthornavirae</taxon>
        <taxon>Pisuviricota</taxon>
        <taxon>Pisoniviricetes</taxon>
        <taxon>Nidovirales</taxon>
        <taxon>Cornidovirineae</taxon>
        <taxon>Coronaviridae</taxon>
        <taxon>Orthocoronavirinae</taxon>
        <taxon>Betacoronavirus</taxon>
        <taxon>Embecovirus</taxon>
        <taxon>Human coronavirus HKU1</taxon>
    </lineage>
</organism>
<accession>Q5MQC5</accession>